<keyword id="KW-0067">ATP-binding</keyword>
<keyword id="KW-0963">Cytoplasm</keyword>
<keyword id="KW-0418">Kinase</keyword>
<keyword id="KW-0547">Nucleotide-binding</keyword>
<keyword id="KW-0808">Transferase</keyword>
<dbReference type="EC" id="2.7.4.8" evidence="1"/>
<dbReference type="EMBL" id="AE015925">
    <property type="protein sequence ID" value="AAP05395.1"/>
    <property type="molecule type" value="Genomic_DNA"/>
</dbReference>
<dbReference type="RefSeq" id="WP_011006610.1">
    <property type="nucleotide sequence ID" value="NC_003361.3"/>
</dbReference>
<dbReference type="SMR" id="Q822M8"/>
<dbReference type="STRING" id="227941.CCA_00653"/>
<dbReference type="KEGG" id="cca:CCA_00653"/>
<dbReference type="eggNOG" id="COG0194">
    <property type="taxonomic scope" value="Bacteria"/>
</dbReference>
<dbReference type="HOGENOM" id="CLU_001715_1_1_0"/>
<dbReference type="OrthoDB" id="9808150at2"/>
<dbReference type="Proteomes" id="UP000002193">
    <property type="component" value="Chromosome"/>
</dbReference>
<dbReference type="GO" id="GO:0005829">
    <property type="term" value="C:cytosol"/>
    <property type="evidence" value="ECO:0007669"/>
    <property type="project" value="TreeGrafter"/>
</dbReference>
<dbReference type="GO" id="GO:0005524">
    <property type="term" value="F:ATP binding"/>
    <property type="evidence" value="ECO:0007669"/>
    <property type="project" value="UniProtKB-UniRule"/>
</dbReference>
<dbReference type="GO" id="GO:0004385">
    <property type="term" value="F:guanylate kinase activity"/>
    <property type="evidence" value="ECO:0007669"/>
    <property type="project" value="UniProtKB-UniRule"/>
</dbReference>
<dbReference type="CDD" id="cd00071">
    <property type="entry name" value="GMPK"/>
    <property type="match status" value="1"/>
</dbReference>
<dbReference type="FunFam" id="3.30.63.10:FF:000005">
    <property type="entry name" value="Guanylate kinase"/>
    <property type="match status" value="1"/>
</dbReference>
<dbReference type="Gene3D" id="3.40.50.300">
    <property type="entry name" value="P-loop containing nucleotide triphosphate hydrolases"/>
    <property type="match status" value="1"/>
</dbReference>
<dbReference type="HAMAP" id="MF_00328">
    <property type="entry name" value="Guanylate_kinase"/>
    <property type="match status" value="1"/>
</dbReference>
<dbReference type="InterPro" id="IPR008145">
    <property type="entry name" value="GK/Ca_channel_bsu"/>
</dbReference>
<dbReference type="InterPro" id="IPR008144">
    <property type="entry name" value="Guanylate_kin-like_dom"/>
</dbReference>
<dbReference type="InterPro" id="IPR017665">
    <property type="entry name" value="Guanylate_kinase"/>
</dbReference>
<dbReference type="InterPro" id="IPR020590">
    <property type="entry name" value="Guanylate_kinase_CS"/>
</dbReference>
<dbReference type="InterPro" id="IPR027417">
    <property type="entry name" value="P-loop_NTPase"/>
</dbReference>
<dbReference type="NCBIfam" id="TIGR03263">
    <property type="entry name" value="guanyl_kin"/>
    <property type="match status" value="1"/>
</dbReference>
<dbReference type="PANTHER" id="PTHR23117:SF13">
    <property type="entry name" value="GUANYLATE KINASE"/>
    <property type="match status" value="1"/>
</dbReference>
<dbReference type="PANTHER" id="PTHR23117">
    <property type="entry name" value="GUANYLATE KINASE-RELATED"/>
    <property type="match status" value="1"/>
</dbReference>
<dbReference type="Pfam" id="PF00625">
    <property type="entry name" value="Guanylate_kin"/>
    <property type="match status" value="1"/>
</dbReference>
<dbReference type="SMART" id="SM00072">
    <property type="entry name" value="GuKc"/>
    <property type="match status" value="1"/>
</dbReference>
<dbReference type="SUPFAM" id="SSF52540">
    <property type="entry name" value="P-loop containing nucleoside triphosphate hydrolases"/>
    <property type="match status" value="1"/>
</dbReference>
<dbReference type="PROSITE" id="PS00856">
    <property type="entry name" value="GUANYLATE_KINASE_1"/>
    <property type="match status" value="1"/>
</dbReference>
<dbReference type="PROSITE" id="PS50052">
    <property type="entry name" value="GUANYLATE_KINASE_2"/>
    <property type="match status" value="1"/>
</dbReference>
<comment type="function">
    <text evidence="1">Essential for recycling GMP and indirectly, cGMP.</text>
</comment>
<comment type="catalytic activity">
    <reaction evidence="1">
        <text>GMP + ATP = GDP + ADP</text>
        <dbReference type="Rhea" id="RHEA:20780"/>
        <dbReference type="ChEBI" id="CHEBI:30616"/>
        <dbReference type="ChEBI" id="CHEBI:58115"/>
        <dbReference type="ChEBI" id="CHEBI:58189"/>
        <dbReference type="ChEBI" id="CHEBI:456216"/>
        <dbReference type="EC" id="2.7.4.8"/>
    </reaction>
</comment>
<comment type="subcellular location">
    <subcellularLocation>
        <location evidence="1">Cytoplasm</location>
    </subcellularLocation>
</comment>
<comment type="similarity">
    <text evidence="1">Belongs to the guanylate kinase family.</text>
</comment>
<protein>
    <recommendedName>
        <fullName evidence="1">Guanylate kinase</fullName>
        <ecNumber evidence="1">2.7.4.8</ecNumber>
    </recommendedName>
    <alternativeName>
        <fullName evidence="1">GMP kinase</fullName>
    </alternativeName>
</protein>
<organism>
    <name type="scientific">Chlamydia caviae (strain ATCC VR-813 / DSM 19441 / 03DC25 / GPIC)</name>
    <name type="common">Chlamydophila caviae</name>
    <dbReference type="NCBI Taxonomy" id="227941"/>
    <lineage>
        <taxon>Bacteria</taxon>
        <taxon>Pseudomonadati</taxon>
        <taxon>Chlamydiota</taxon>
        <taxon>Chlamydiia</taxon>
        <taxon>Chlamydiales</taxon>
        <taxon>Chlamydiaceae</taxon>
        <taxon>Chlamydia/Chlamydophila group</taxon>
        <taxon>Chlamydia</taxon>
    </lineage>
</organism>
<reference key="1">
    <citation type="journal article" date="2003" name="Nucleic Acids Res.">
        <title>Genome sequence of Chlamydophila caviae (Chlamydia psittaci GPIC): examining the role of niche-specific genes in the evolution of the Chlamydiaceae.</title>
        <authorList>
            <person name="Read T.D."/>
            <person name="Myers G.S.A."/>
            <person name="Brunham R.C."/>
            <person name="Nelson W.C."/>
            <person name="Paulsen I.T."/>
            <person name="Heidelberg J.F."/>
            <person name="Holtzapple E.K."/>
            <person name="Khouri H.M."/>
            <person name="Federova N.B."/>
            <person name="Carty H.A."/>
            <person name="Umayam L.A."/>
            <person name="Haft D.H."/>
            <person name="Peterson J.D."/>
            <person name="Beanan M.J."/>
            <person name="White O."/>
            <person name="Salzberg S.L."/>
            <person name="Hsia R.-C."/>
            <person name="McClarty G."/>
            <person name="Rank R.G."/>
            <person name="Bavoil P.M."/>
            <person name="Fraser C.M."/>
        </authorList>
    </citation>
    <scope>NUCLEOTIDE SEQUENCE [LARGE SCALE GENOMIC DNA]</scope>
    <source>
        <strain>ATCC VR-813 / DSM 19441 / 03DC25 / GPIC</strain>
    </source>
</reference>
<evidence type="ECO:0000255" key="1">
    <source>
        <dbReference type="HAMAP-Rule" id="MF_00328"/>
    </source>
</evidence>
<name>KGUA_CHLCV</name>
<proteinExistence type="inferred from homology"/>
<sequence length="204" mass="23398">MKDKVRVPFSPDHPSCAPKLFTISAPAGAGKTTLVRMLAQEFPDSFQKTLSLTTRAPRPEEVSGIDYWFVSQEEFKQRLDSNNFLEWVLLFGEYYGTSRLEIDEIWKSGKHAVAVIDVEGALSLKSKIPTVTIFISAPSQEELERRLKYRGSEQDSQRQERLQHSLIEQAASNQFEYVIINDDLQKSYEILKSIFIAEEHRNVL</sequence>
<feature type="chain" id="PRO_0000170518" description="Guanylate kinase">
    <location>
        <begin position="1"/>
        <end position="204"/>
    </location>
</feature>
<feature type="domain" description="Guanylate kinase-like" evidence="1">
    <location>
        <begin position="18"/>
        <end position="196"/>
    </location>
</feature>
<feature type="binding site" evidence="1">
    <location>
        <begin position="25"/>
        <end position="32"/>
    </location>
    <ligand>
        <name>ATP</name>
        <dbReference type="ChEBI" id="CHEBI:30616"/>
    </ligand>
</feature>
<gene>
    <name evidence="1" type="primary">gmk</name>
    <name type="ordered locus">CCA_00653</name>
</gene>
<accession>Q822M8</accession>